<organism>
    <name type="scientific">Ajellomyces dermatitidis (strain ER-3 / ATCC MYA-2586)</name>
    <name type="common">Blastomyces dermatitidis</name>
    <dbReference type="NCBI Taxonomy" id="559297"/>
    <lineage>
        <taxon>Eukaryota</taxon>
        <taxon>Fungi</taxon>
        <taxon>Dikarya</taxon>
        <taxon>Ascomycota</taxon>
        <taxon>Pezizomycotina</taxon>
        <taxon>Eurotiomycetes</taxon>
        <taxon>Eurotiomycetidae</taxon>
        <taxon>Onygenales</taxon>
        <taxon>Ajellomycetaceae</taxon>
        <taxon>Blastomyces</taxon>
    </lineage>
</organism>
<name>LCL2_AJEDR</name>
<keyword id="KW-0732">Signal</keyword>
<protein>
    <recommendedName>
        <fullName>Long chronological lifespan protein 2</fullName>
    </recommendedName>
</protein>
<accession>C5GHR3</accession>
<gene>
    <name type="primary">LCL2</name>
    <name type="ORF">BDCG_04299</name>
</gene>
<sequence length="121" mass="13217">MIHIITGTLLGLLFLATGARAQFQFFEQMFGGGQQQQESQEHNVPSDSSWYQRTYDNARCSDYLCPGTLACVSVPHHCPCQHPGVEDKFELGDGSAICVSKGGFKPGEAARKVELARKGLL</sequence>
<evidence type="ECO:0000250" key="1"/>
<evidence type="ECO:0000255" key="2"/>
<evidence type="ECO:0000305" key="3"/>
<proteinExistence type="inferred from homology"/>
<dbReference type="EMBL" id="EQ999976">
    <property type="protein sequence ID" value="EEQ89179.1"/>
    <property type="molecule type" value="Genomic_DNA"/>
</dbReference>
<dbReference type="SMR" id="C5GHR3"/>
<dbReference type="STRING" id="559297.C5GHR3"/>
<dbReference type="VEuPathDB" id="FungiDB:BDCG_04299"/>
<dbReference type="eggNOG" id="ENOG502S416">
    <property type="taxonomic scope" value="Eukaryota"/>
</dbReference>
<dbReference type="HOGENOM" id="CLU_142363_0_0_1"/>
<dbReference type="OMA" id="DNYLCPD"/>
<dbReference type="GO" id="GO:0036503">
    <property type="term" value="P:ERAD pathway"/>
    <property type="evidence" value="ECO:0007669"/>
    <property type="project" value="TreeGrafter"/>
</dbReference>
<dbReference type="CDD" id="cd23996">
    <property type="entry name" value="LCL2-like"/>
    <property type="match status" value="1"/>
</dbReference>
<dbReference type="InterPro" id="IPR034543">
    <property type="entry name" value="LCL2"/>
</dbReference>
<dbReference type="PANTHER" id="PTHR38425">
    <property type="entry name" value="LONG CHRONOLOGICAL LIFESPAN PROTEIN 2"/>
    <property type="match status" value="1"/>
</dbReference>
<dbReference type="PANTHER" id="PTHR38425:SF1">
    <property type="entry name" value="LONG CHRONOLOGICAL LIFESPAN PROTEIN 2"/>
    <property type="match status" value="1"/>
</dbReference>
<comment type="function">
    <text evidence="1">Probable component of the endoplasmic reticulum-associated degradation (ERAD) pathway.</text>
</comment>
<comment type="similarity">
    <text evidence="3">Belongs to the LCL2 family.</text>
</comment>
<reference key="1">
    <citation type="journal article" date="2015" name="PLoS Genet.">
        <title>The dynamic genome and transcriptome of the human fungal pathogen Blastomyces and close relative Emmonsia.</title>
        <authorList>
            <person name="Munoz J.F."/>
            <person name="Gauthier G.M."/>
            <person name="Desjardins C.A."/>
            <person name="Gallo J.E."/>
            <person name="Holder J."/>
            <person name="Sullivan T.D."/>
            <person name="Marty A.J."/>
            <person name="Carmen J.C."/>
            <person name="Chen Z."/>
            <person name="Ding L."/>
            <person name="Gujja S."/>
            <person name="Magrini V."/>
            <person name="Misas E."/>
            <person name="Mitreva M."/>
            <person name="Priest M."/>
            <person name="Saif S."/>
            <person name="Whiston E.A."/>
            <person name="Young S."/>
            <person name="Zeng Q."/>
            <person name="Goldman W.E."/>
            <person name="Mardis E.R."/>
            <person name="Taylor J.W."/>
            <person name="McEwen J.G."/>
            <person name="Clay O.K."/>
            <person name="Klein B.S."/>
            <person name="Cuomo C.A."/>
        </authorList>
    </citation>
    <scope>NUCLEOTIDE SEQUENCE [LARGE SCALE GENOMIC DNA]</scope>
    <source>
        <strain>ER-3 / ATCC MYA-2586</strain>
    </source>
</reference>
<feature type="signal peptide" evidence="2">
    <location>
        <begin position="1"/>
        <end position="21"/>
    </location>
</feature>
<feature type="chain" id="PRO_0000408586" description="Long chronological lifespan protein 2">
    <location>
        <begin position="22"/>
        <end position="121"/>
    </location>
</feature>